<dbReference type="EC" id="7.1.1.-" evidence="1"/>
<dbReference type="EMBL" id="CP000001">
    <property type="protein sequence ID" value="AAU15280.1"/>
    <property type="molecule type" value="Genomic_DNA"/>
</dbReference>
<dbReference type="RefSeq" id="WP_000179275.1">
    <property type="nucleotide sequence ID" value="NZ_CP009968.1"/>
</dbReference>
<dbReference type="SMR" id="Q630U8"/>
<dbReference type="GeneID" id="75088486"/>
<dbReference type="KEGG" id="bcz:BCE33L5000"/>
<dbReference type="PATRIC" id="fig|288681.22.peg.346"/>
<dbReference type="Proteomes" id="UP000002612">
    <property type="component" value="Chromosome"/>
</dbReference>
<dbReference type="GO" id="GO:0030964">
    <property type="term" value="C:NADH dehydrogenase complex"/>
    <property type="evidence" value="ECO:0007669"/>
    <property type="project" value="TreeGrafter"/>
</dbReference>
<dbReference type="GO" id="GO:0005886">
    <property type="term" value="C:plasma membrane"/>
    <property type="evidence" value="ECO:0007669"/>
    <property type="project" value="UniProtKB-SubCell"/>
</dbReference>
<dbReference type="GO" id="GO:0008137">
    <property type="term" value="F:NADH dehydrogenase (ubiquinone) activity"/>
    <property type="evidence" value="ECO:0007669"/>
    <property type="project" value="InterPro"/>
</dbReference>
<dbReference type="GO" id="GO:0050136">
    <property type="term" value="F:NADH:ubiquinone reductase (non-electrogenic) activity"/>
    <property type="evidence" value="ECO:0007669"/>
    <property type="project" value="UniProtKB-UniRule"/>
</dbReference>
<dbReference type="GO" id="GO:0048038">
    <property type="term" value="F:quinone binding"/>
    <property type="evidence" value="ECO:0007669"/>
    <property type="project" value="UniProtKB-KW"/>
</dbReference>
<dbReference type="FunFam" id="1.20.58.1610:FF:000005">
    <property type="entry name" value="NADH-quinone oxidoreductase subunit A"/>
    <property type="match status" value="1"/>
</dbReference>
<dbReference type="Gene3D" id="1.20.58.1610">
    <property type="entry name" value="NADH:ubiquinone/plastoquinone oxidoreductase, chain 3"/>
    <property type="match status" value="1"/>
</dbReference>
<dbReference type="HAMAP" id="MF_01394">
    <property type="entry name" value="NDH1_NuoA"/>
    <property type="match status" value="1"/>
</dbReference>
<dbReference type="InterPro" id="IPR023043">
    <property type="entry name" value="NAD(P)H_OxRDtase_bac/plastid"/>
</dbReference>
<dbReference type="InterPro" id="IPR000440">
    <property type="entry name" value="NADH_UbQ/plastoQ_OxRdtase_su3"/>
</dbReference>
<dbReference type="InterPro" id="IPR038430">
    <property type="entry name" value="NDAH_ubi_oxred_su3_sf"/>
</dbReference>
<dbReference type="NCBIfam" id="NF005839">
    <property type="entry name" value="PRK07756.1"/>
    <property type="match status" value="1"/>
</dbReference>
<dbReference type="PANTHER" id="PTHR11058">
    <property type="entry name" value="NADH-UBIQUINONE OXIDOREDUCTASE CHAIN 3"/>
    <property type="match status" value="1"/>
</dbReference>
<dbReference type="PANTHER" id="PTHR11058:SF9">
    <property type="entry name" value="NADH-UBIQUINONE OXIDOREDUCTASE CHAIN 3"/>
    <property type="match status" value="1"/>
</dbReference>
<dbReference type="Pfam" id="PF00507">
    <property type="entry name" value="Oxidored_q4"/>
    <property type="match status" value="1"/>
</dbReference>
<keyword id="KW-1003">Cell membrane</keyword>
<keyword id="KW-0472">Membrane</keyword>
<keyword id="KW-0520">NAD</keyword>
<keyword id="KW-0874">Quinone</keyword>
<keyword id="KW-1278">Translocase</keyword>
<keyword id="KW-0812">Transmembrane</keyword>
<keyword id="KW-1133">Transmembrane helix</keyword>
<keyword id="KW-0813">Transport</keyword>
<protein>
    <recommendedName>
        <fullName evidence="1">NADH-quinone oxidoreductase subunit A</fullName>
        <ecNumber evidence="1">7.1.1.-</ecNumber>
    </recommendedName>
    <alternativeName>
        <fullName evidence="1">NADH dehydrogenase I subunit A</fullName>
    </alternativeName>
    <alternativeName>
        <fullName evidence="1">NDH-1 subunit A</fullName>
    </alternativeName>
    <alternativeName>
        <fullName evidence="1">NUO1</fullName>
    </alternativeName>
</protein>
<name>NUOA_BACCZ</name>
<proteinExistence type="inferred from homology"/>
<reference key="1">
    <citation type="journal article" date="2006" name="J. Bacteriol.">
        <title>Pathogenomic sequence analysis of Bacillus cereus and Bacillus thuringiensis isolates closely related to Bacillus anthracis.</title>
        <authorList>
            <person name="Han C.S."/>
            <person name="Xie G."/>
            <person name="Challacombe J.F."/>
            <person name="Altherr M.R."/>
            <person name="Bhotika S.S."/>
            <person name="Bruce D."/>
            <person name="Campbell C.S."/>
            <person name="Campbell M.L."/>
            <person name="Chen J."/>
            <person name="Chertkov O."/>
            <person name="Cleland C."/>
            <person name="Dimitrijevic M."/>
            <person name="Doggett N.A."/>
            <person name="Fawcett J.J."/>
            <person name="Glavina T."/>
            <person name="Goodwin L.A."/>
            <person name="Hill K.K."/>
            <person name="Hitchcock P."/>
            <person name="Jackson P.J."/>
            <person name="Keim P."/>
            <person name="Kewalramani A.R."/>
            <person name="Longmire J."/>
            <person name="Lucas S."/>
            <person name="Malfatti S."/>
            <person name="McMurry K."/>
            <person name="Meincke L.J."/>
            <person name="Misra M."/>
            <person name="Moseman B.L."/>
            <person name="Mundt M."/>
            <person name="Munk A.C."/>
            <person name="Okinaka R.T."/>
            <person name="Parson-Quintana B."/>
            <person name="Reilly L.P."/>
            <person name="Richardson P."/>
            <person name="Robinson D.L."/>
            <person name="Rubin E."/>
            <person name="Saunders E."/>
            <person name="Tapia R."/>
            <person name="Tesmer J.G."/>
            <person name="Thayer N."/>
            <person name="Thompson L.S."/>
            <person name="Tice H."/>
            <person name="Ticknor L.O."/>
            <person name="Wills P.L."/>
            <person name="Brettin T.S."/>
            <person name="Gilna P."/>
        </authorList>
    </citation>
    <scope>NUCLEOTIDE SEQUENCE [LARGE SCALE GENOMIC DNA]</scope>
    <source>
        <strain>ZK / E33L</strain>
    </source>
</reference>
<gene>
    <name evidence="1" type="primary">nuoA</name>
    <name type="ordered locus">BCE33L5000</name>
</gene>
<evidence type="ECO:0000255" key="1">
    <source>
        <dbReference type="HAMAP-Rule" id="MF_01394"/>
    </source>
</evidence>
<comment type="function">
    <text evidence="1">NDH-1 shuttles electrons from NADH, via FMN and iron-sulfur (Fe-S) centers, to quinones in the respiratory chain. The immediate electron acceptor for the enzyme in this species is believed to be a menaquinone. Couples the redox reaction to proton translocation (for every two electrons transferred, four hydrogen ions are translocated across the cytoplasmic membrane), and thus conserves the redox energy in a proton gradient.</text>
</comment>
<comment type="catalytic activity">
    <reaction evidence="1">
        <text>a quinone + NADH + 5 H(+)(in) = a quinol + NAD(+) + 4 H(+)(out)</text>
        <dbReference type="Rhea" id="RHEA:57888"/>
        <dbReference type="ChEBI" id="CHEBI:15378"/>
        <dbReference type="ChEBI" id="CHEBI:24646"/>
        <dbReference type="ChEBI" id="CHEBI:57540"/>
        <dbReference type="ChEBI" id="CHEBI:57945"/>
        <dbReference type="ChEBI" id="CHEBI:132124"/>
    </reaction>
</comment>
<comment type="subunit">
    <text evidence="1">NDH-1 is composed of 14 different subunits. Subunits NuoA, H, J, K, L, M, N constitute the membrane sector of the complex.</text>
</comment>
<comment type="subcellular location">
    <subcellularLocation>
        <location evidence="1">Cell membrane</location>
        <topology evidence="1">Multi-pass membrane protein</topology>
    </subcellularLocation>
</comment>
<comment type="similarity">
    <text evidence="1">Belongs to the complex I subunit 3 family.</text>
</comment>
<organism>
    <name type="scientific">Bacillus cereus (strain ZK / E33L)</name>
    <dbReference type="NCBI Taxonomy" id="288681"/>
    <lineage>
        <taxon>Bacteria</taxon>
        <taxon>Bacillati</taxon>
        <taxon>Bacillota</taxon>
        <taxon>Bacilli</taxon>
        <taxon>Bacillales</taxon>
        <taxon>Bacillaceae</taxon>
        <taxon>Bacillus</taxon>
        <taxon>Bacillus cereus group</taxon>
    </lineage>
</organism>
<feature type="chain" id="PRO_0000362622" description="NADH-quinone oxidoreductase subunit A">
    <location>
        <begin position="1"/>
        <end position="122"/>
    </location>
</feature>
<feature type="transmembrane region" description="Helical" evidence="1">
    <location>
        <begin position="10"/>
        <end position="30"/>
    </location>
</feature>
<feature type="transmembrane region" description="Helical" evidence="1">
    <location>
        <begin position="66"/>
        <end position="86"/>
    </location>
</feature>
<feature type="transmembrane region" description="Helical" evidence="1">
    <location>
        <begin position="91"/>
        <end position="111"/>
    </location>
</feature>
<accession>Q630U8</accession>
<sequence>MASVYENSYMIVLIFLLLGILLPVVALTLGRMLRPNKPSAAKATTYESGIEPFHDANIRFHARYYIFALLFVIFDVETLFLYPWAVAYDNLGLFALIEMLIFVVMLLVGLAYAWKKKVLQWL</sequence>